<sequence>MNEGEVVLTPEQIQTLRGYASRGDTYGGWRYLANLGDRYADNAAAIVGKDTNLNGLNLWMKKGVENLWDDTVGKKTRLEKFDRVALQHFSQYVDLINKNNGRLPNTSEIERSYYKAVTYHGVSSSAAIDLVINRSLPDMADGYWALGLGIEAERIHNEQAVNNPNGSERDNRKQLISALDKGFDGSFKEKHFTFLQSVMMDLTKLGVEYTIDGWQKIGGWGNGIINDLYKSVVKREWTGIFEIVNNNIKQGNEAFKNEINSLVHDMKAAGKEFGDDLNTQWNNLTQAAEIIYNDIVDNTSQGIEKGVKAIKELSEKMKNAASDLADGSAEKAKQVVEDLAQAAKEAYENAKSTAEKAAQAAREFFKGLPSFKDLAEKFRDLFPNPEGWIDDGHQCFAPWVKETKKRNGKYHVYDPLALDLDGDGIETVATKGFSGSLFDHNRDGIRTATGWVAADDGLLVRDLNGNGIIDNGAELFGDNTKLADGSFAKHGYAALAELDSNGDNIINAADAAFQTLRVWQDLNQDGISQANELRTLEELGIQSLDLAYKDVNKNLGNGNTLAQQGSYTKTDGTTAKMGDLLLAADNLHSRFKDKVELTAEQAKAANLAGIGRLRDLREAAALSGDLANMLKAYSAAETKEAQLALLDNLIHKWAETDSNWGKKSPMRLSTDWTQTANEGIALTPSQVAQLKKNALVSLSDKAKAAIDAARDRIAVLDAYTGQDSSTLYYMSEEDALNIVKVTNDTYDHLAKNIYQNLLFQTRLQPYLNQISFKMENDTFTLDFSGLVQAFNHVKETNPQKAFVDLAEMLAYGELRSWYEGRRLMADYVEEAKKAGKFEDYQKVLGQETVALLAKTSGTQADDILQNVGFGHNKNVSLYGNDGNDTLIGGAGNDYLEGGSGSDTYVFGKGFGQDTVYNYDYATGRKDIIRFTDGITADMLTFTREGNHLLIKAKDDSGQVTVQSYFQNDGSGAYRIDEIHFDNGKVLDVATVKELVQQSTDGSDRLYAYQSGNTLNGGLGDDYLYGADGDDLLNGDAGNDSIYSGNGNDTLNGGEGNDALYGYNGNDALNGGEGNDHLNGEDGNDTLIGGAGNDYLEGGSGSDTYVFGKGFGQDTVYNYDYATGRKDIIRFTDGITADMLTFTREGNHLLIKAKDGSGQVTVQSYFQNDGSGAYRIDEIHFDNGKVLDVATVKELVQQSTDGSDRLYAYQSGNTLNGGLGDDYLYGADGDDLLNGDAGNDSIYSGNGNDTLDGGEGNDALYGYNGNDALNGGEGNDHLNGEDGNDTLIGGAGNDYLEGGSGSDTYVFGKGFGQDTVYNYDYATGRKDIIRFTDGITADMLTFTREGNHLLIKAKDDSGQVTVQSYFQNDGSGAYRIDEIHFDNGKVLDVATVKELVQQSTDGSDRLYAYQSGSTLNGGLGDDYLYGADGDDLLNGDAGNDSIYSGNGNDTLDGGEGNDALYGYNGNDALNGGEGNDHLNGEDGNDTLIGGAGNDYLEGGSGSDTYVFGKGFGQDTVYNYDYATGRKDIIRFTDGITADMLTFTREGNHLLIKAKDGSGQVTVQSYFQNDGSGAYRIDEIHFDNGKVLDVATVKKLVQQSTDGSDRLYAYQSGNTLNGGLGDDYLYGADGDDLLNGDAGNDSIYSGNGNDTLNGGEGNDALYGYNGNDVLNGGEGNDHLNGEDGNDTLIGGAGNDYLEGGSGSDTYVFGKGFGQDTVYNYHVDKNSDTMHFKGFKAADVHFIRSGSDLVLSASEQDNVRISGFFYGENHRVDTFVFDDAAISNPDFAKYINAGNNLVQSMSVFGSNTAATGGNVDANTQSVQQPLLVTPSA</sequence>
<organism>
    <name type="scientific">Neisseria meningitidis serogroup C</name>
    <dbReference type="NCBI Taxonomy" id="135720"/>
    <lineage>
        <taxon>Bacteria</taxon>
        <taxon>Pseudomonadati</taxon>
        <taxon>Pseudomonadota</taxon>
        <taxon>Betaproteobacteria</taxon>
        <taxon>Neisseriales</taxon>
        <taxon>Neisseriaceae</taxon>
        <taxon>Neisseria</taxon>
    </lineage>
</organism>
<dbReference type="EMBL" id="L06299">
    <property type="protein sequence ID" value="AAA99902.1"/>
    <property type="molecule type" value="Genomic_DNA"/>
</dbReference>
<dbReference type="PIR" id="S35027">
    <property type="entry name" value="S35027"/>
</dbReference>
<dbReference type="PDB" id="6SJW">
    <property type="method" value="NMR"/>
    <property type="chains" value="A=415-591"/>
</dbReference>
<dbReference type="PDB" id="6SJX">
    <property type="method" value="NMR"/>
    <property type="chains" value="A=416-591"/>
</dbReference>
<dbReference type="PDBsum" id="6SJW"/>
<dbReference type="PDBsum" id="6SJX"/>
<dbReference type="BMRB" id="P55127"/>
<dbReference type="SMR" id="P55127"/>
<dbReference type="GO" id="GO:0009279">
    <property type="term" value="C:cell outer membrane"/>
    <property type="evidence" value="ECO:0007669"/>
    <property type="project" value="UniProtKB-SubCell"/>
</dbReference>
<dbReference type="GO" id="GO:0005576">
    <property type="term" value="C:extracellular region"/>
    <property type="evidence" value="ECO:0007669"/>
    <property type="project" value="UniProtKB-SubCell"/>
</dbReference>
<dbReference type="GO" id="GO:0005509">
    <property type="term" value="F:calcium ion binding"/>
    <property type="evidence" value="ECO:0007669"/>
    <property type="project" value="InterPro"/>
</dbReference>
<dbReference type="GO" id="GO:0046872">
    <property type="term" value="F:metal ion binding"/>
    <property type="evidence" value="ECO:0000269"/>
    <property type="project" value="DisProt"/>
</dbReference>
<dbReference type="GO" id="GO:0090729">
    <property type="term" value="F:toxin activity"/>
    <property type="evidence" value="ECO:0007669"/>
    <property type="project" value="UniProtKB-KW"/>
</dbReference>
<dbReference type="Gene3D" id="1.20.120.20">
    <property type="entry name" value="Apolipoprotein"/>
    <property type="match status" value="1"/>
</dbReference>
<dbReference type="Gene3D" id="2.150.10.10">
    <property type="entry name" value="Serralysin-like metalloprotease, C-terminal"/>
    <property type="match status" value="9"/>
</dbReference>
<dbReference type="InterPro" id="IPR010566">
    <property type="entry name" value="Haemolys_ca-bd"/>
</dbReference>
<dbReference type="InterPro" id="IPR018511">
    <property type="entry name" value="Hemolysin-typ_Ca-bd_CS"/>
</dbReference>
<dbReference type="InterPro" id="IPR001343">
    <property type="entry name" value="Hemolysn_Ca-bd"/>
</dbReference>
<dbReference type="InterPro" id="IPR050557">
    <property type="entry name" value="RTX_toxin/Mannuronan_C5-epim"/>
</dbReference>
<dbReference type="InterPro" id="IPR003995">
    <property type="entry name" value="RTX_toxin_determinant-A"/>
</dbReference>
<dbReference type="InterPro" id="IPR011049">
    <property type="entry name" value="Serralysin-like_metalloprot_C"/>
</dbReference>
<dbReference type="InterPro" id="IPR028974">
    <property type="entry name" value="TSP_type-3_rpt"/>
</dbReference>
<dbReference type="PANTHER" id="PTHR38340">
    <property type="entry name" value="S-LAYER PROTEIN"/>
    <property type="match status" value="1"/>
</dbReference>
<dbReference type="PANTHER" id="PTHR38340:SF1">
    <property type="entry name" value="S-LAYER PROTEIN"/>
    <property type="match status" value="1"/>
</dbReference>
<dbReference type="Pfam" id="PF06594">
    <property type="entry name" value="HCBP_related"/>
    <property type="match status" value="4"/>
</dbReference>
<dbReference type="Pfam" id="PF00353">
    <property type="entry name" value="HemolysinCabind"/>
    <property type="match status" value="9"/>
</dbReference>
<dbReference type="PRINTS" id="PR00313">
    <property type="entry name" value="CABNDNGRPT"/>
</dbReference>
<dbReference type="PRINTS" id="PR01488">
    <property type="entry name" value="RTXTOXINA"/>
</dbReference>
<dbReference type="SUPFAM" id="SSF51120">
    <property type="entry name" value="beta-Roll"/>
    <property type="match status" value="6"/>
</dbReference>
<dbReference type="SUPFAM" id="SSF103647">
    <property type="entry name" value="TSP type-3 repeat"/>
    <property type="match status" value="1"/>
</dbReference>
<dbReference type="PROSITE" id="PS00330">
    <property type="entry name" value="HEMOLYSIN_CALCIUM"/>
    <property type="match status" value="17"/>
</dbReference>
<name>FRPC_NEIMC</name>
<accession>P55127</accession>
<proteinExistence type="evidence at protein level"/>
<reference key="1">
    <citation type="journal article" date="1993" name="Mol. Microbiol.">
        <title>Cloning and nucleotide sequence of frpC, a second gene from Neisseria meningitidis encoding a protein similar to RTX cytotoxins.</title>
        <authorList>
            <person name="Thompson S.A."/>
            <person name="Wang L.L."/>
            <person name="Sparling P.F."/>
        </authorList>
    </citation>
    <scope>NUCLEOTIDE SEQUENCE [GENOMIC DNA]</scope>
    <source>
        <strain>FAM20 / Serogroup C</strain>
    </source>
</reference>
<comment type="function">
    <text>May participate in the pathogenesis of meningococcal disease.</text>
</comment>
<comment type="subcellular location">
    <subcellularLocation>
        <location>Cell outer membrane</location>
        <topology>Peripheral membrane protein</topology>
    </subcellularLocation>
    <subcellularLocation>
        <location>Secreted</location>
    </subcellularLocation>
</comment>
<comment type="domain">
    <text>The Gly-rich region is probably involved in binding calcium, which is required for target cell-binding or cytolytic activity.</text>
</comment>
<comment type="similarity">
    <text evidence="1">Belongs to the RTX prokaryotic toxin (TC 1.C.11) family.</text>
</comment>
<feature type="chain" id="PRO_0000196245" description="Iron-regulated protein FrpC">
    <location>
        <begin position="1"/>
        <end position="1829"/>
    </location>
</feature>
<feature type="repeat" description="Hemolysin-type calcium-binding 1">
    <location>
        <begin position="869"/>
        <end position="886"/>
    </location>
</feature>
<feature type="repeat" description="Hemolysin-type calcium-binding 2">
    <location>
        <begin position="887"/>
        <end position="904"/>
    </location>
</feature>
<feature type="repeat" description="Hemolysin-type calcium-binding 3">
    <location>
        <begin position="1015"/>
        <end position="1032"/>
    </location>
</feature>
<feature type="repeat" description="Hemolysin-type calcium-binding 4">
    <location>
        <begin position="1033"/>
        <end position="1050"/>
    </location>
</feature>
<feature type="repeat" description="Hemolysin-type calcium-binding 5">
    <location>
        <begin position="1051"/>
        <end position="1068"/>
    </location>
</feature>
<feature type="repeat" description="Hemolysin-type calcium-binding 6">
    <location>
        <begin position="1069"/>
        <end position="1086"/>
    </location>
</feature>
<feature type="repeat" description="Hemolysin-type calcium-binding 7">
    <location>
        <begin position="1087"/>
        <end position="1104"/>
    </location>
</feature>
<feature type="repeat" description="Hemolysin-type calcium-binding 8">
    <location>
        <begin position="1215"/>
        <end position="1232"/>
    </location>
</feature>
<feature type="repeat" description="Hemolysin-type calcium-binding 9">
    <location>
        <begin position="1233"/>
        <end position="1250"/>
    </location>
</feature>
<feature type="repeat" description="Hemolysin-type calcium-binding 10">
    <location>
        <begin position="1251"/>
        <end position="1268"/>
    </location>
</feature>
<feature type="repeat" description="Hemolysin-type calcium-binding 11">
    <location>
        <begin position="1269"/>
        <end position="1286"/>
    </location>
</feature>
<feature type="repeat" description="Hemolysin-type calcium-binding 12">
    <location>
        <begin position="1287"/>
        <end position="1304"/>
    </location>
</feature>
<feature type="repeat" description="Hemolysin-type calcium-binding 13">
    <location>
        <begin position="1415"/>
        <end position="1432"/>
    </location>
</feature>
<feature type="repeat" description="Hemolysin-type calcium-binding 14">
    <location>
        <begin position="1433"/>
        <end position="1450"/>
    </location>
</feature>
<feature type="repeat" description="Hemolysin-type calcium-binding 15">
    <location>
        <begin position="1451"/>
        <end position="1468"/>
    </location>
</feature>
<feature type="repeat" description="Hemolysin-type calcium-binding 16">
    <location>
        <begin position="1469"/>
        <end position="1486"/>
    </location>
</feature>
<feature type="repeat" description="Hemolysin-type calcium-binding 17">
    <location>
        <begin position="1487"/>
        <end position="1504"/>
    </location>
</feature>
<feature type="repeat" description="Hemolysin-type calcium-binding 18">
    <location>
        <begin position="1615"/>
        <end position="1632"/>
    </location>
</feature>
<feature type="repeat" description="Hemolysin-type calcium-binding 19">
    <location>
        <begin position="1633"/>
        <end position="1650"/>
    </location>
</feature>
<feature type="repeat" description="Hemolysin-type calcium-binding 20">
    <location>
        <begin position="1651"/>
        <end position="1668"/>
    </location>
</feature>
<feature type="repeat" description="Hemolysin-type calcium-binding 21">
    <location>
        <begin position="1669"/>
        <end position="1686"/>
    </location>
</feature>
<feature type="repeat" description="Hemolysin-type calcium-binding 22">
    <location>
        <begin position="1687"/>
        <end position="1704"/>
    </location>
</feature>
<feature type="strand" evidence="2">
    <location>
        <begin position="416"/>
        <end position="418"/>
    </location>
</feature>
<feature type="strand" evidence="2">
    <location>
        <begin position="420"/>
        <end position="423"/>
    </location>
</feature>
<feature type="strand" evidence="2">
    <location>
        <begin position="427"/>
        <end position="432"/>
    </location>
</feature>
<feature type="turn" evidence="2">
    <location>
        <begin position="440"/>
        <end position="443"/>
    </location>
</feature>
<feature type="strand" evidence="2">
    <location>
        <begin position="449"/>
        <end position="452"/>
    </location>
</feature>
<feature type="strand" evidence="2">
    <location>
        <begin position="457"/>
        <end position="460"/>
    </location>
</feature>
<feature type="strand" evidence="2">
    <location>
        <begin position="463"/>
        <end position="468"/>
    </location>
</feature>
<feature type="strand" evidence="3">
    <location>
        <begin position="474"/>
        <end position="477"/>
    </location>
</feature>
<feature type="helix" evidence="2">
    <location>
        <begin position="491"/>
        <end position="496"/>
    </location>
</feature>
<feature type="strand" evidence="2">
    <location>
        <begin position="500"/>
        <end position="507"/>
    </location>
</feature>
<feature type="helix" evidence="2">
    <location>
        <begin position="511"/>
        <end position="514"/>
    </location>
</feature>
<feature type="strand" evidence="2">
    <location>
        <begin position="517"/>
        <end position="519"/>
    </location>
</feature>
<feature type="strand" evidence="2">
    <location>
        <begin position="522"/>
        <end position="526"/>
    </location>
</feature>
<feature type="helix" evidence="2">
    <location>
        <begin position="530"/>
        <end position="532"/>
    </location>
</feature>
<feature type="strand" evidence="3">
    <location>
        <begin position="533"/>
        <end position="535"/>
    </location>
</feature>
<feature type="turn" evidence="2">
    <location>
        <begin position="536"/>
        <end position="540"/>
    </location>
</feature>
<feature type="strand" evidence="2">
    <location>
        <begin position="541"/>
        <end position="545"/>
    </location>
</feature>
<feature type="strand" evidence="2">
    <location>
        <begin position="549"/>
        <end position="556"/>
    </location>
</feature>
<feature type="strand" evidence="2">
    <location>
        <begin position="559"/>
        <end position="569"/>
    </location>
</feature>
<feature type="strand" evidence="2">
    <location>
        <begin position="574"/>
        <end position="581"/>
    </location>
</feature>
<feature type="turn" evidence="2">
    <location>
        <begin position="586"/>
        <end position="590"/>
    </location>
</feature>
<protein>
    <recommendedName>
        <fullName>Iron-regulated protein FrpC</fullName>
    </recommendedName>
</protein>
<evidence type="ECO:0000305" key="1"/>
<evidence type="ECO:0007829" key="2">
    <source>
        <dbReference type="PDB" id="6SJW"/>
    </source>
</evidence>
<evidence type="ECO:0007829" key="3">
    <source>
        <dbReference type="PDB" id="6SJX"/>
    </source>
</evidence>
<gene>
    <name type="primary">frpC</name>
</gene>
<keyword id="KW-0002">3D-structure</keyword>
<keyword id="KW-0106">Calcium</keyword>
<keyword id="KW-0998">Cell outer membrane</keyword>
<keyword id="KW-0472">Membrane</keyword>
<keyword id="KW-0677">Repeat</keyword>
<keyword id="KW-0964">Secreted</keyword>
<keyword id="KW-0800">Toxin</keyword>
<keyword id="KW-0843">Virulence</keyword>